<reference key="1">
    <citation type="journal article" date="1992" name="Infect. Immun.">
        <title>Cloning and nucleotide sequence of the gene encoding the 136-kilodalton surface protein (muramidase-released protein) of Streptococcus suis type 2.</title>
        <authorList>
            <person name="Smith H.E."/>
            <person name="Vecht U."/>
            <person name="Gielkens A.L."/>
            <person name="Smits M.A."/>
        </authorList>
    </citation>
    <scope>NUCLEOTIDE SEQUENCE [GENOMIC DNA]</scope>
    <source>
        <strain>Serotype 2 / D282</strain>
    </source>
</reference>
<proteinExistence type="inferred from homology"/>
<sequence>MRRSNKKSFDWYGTKQQFSIRKYHFGAASVLLGVSLVLGAGAQVVKADETVASSEPTIASSVAPASTEAVAEEAEKTNAENTSAVATTSTEVEKAKAVLEQVTSESPLLAGLGQKELAKTEDATLAKAIEDAQTKLAAAKAILADSEATVEQVEAQVAAVKVANEALGNELQKYTVDGLLTAALDTVAPDTTASTLKVGDGEGTLLDSTTTATPSMAEPNGAAIAPHTLRTQDGIKATSEPNWYTFESYDLYSYNKNMASSTYKGAEVDAYIRYSLDNDSSTTAVLAELVSRTTGDVLEKYTIEPGESVTFSHPTKVNANNSNITVTYDTSLASANTPGALKFSANDDVYSTIIVPAYQINTTRYVTESGKVLATYGLQTIAGQVVTPSSVRVFTGYDYVATTTKAVQGPYPKGTVYLAGTVQKDTVQYKVIREIVENDQAVLKFYYLDPTYKGEVDWRGTDTTGFIELLTTSPTTYKVGTIYDYNINSKITAPFTIDPTKNVMVFKESEQNEQGSKYRVIAQWSGDETTKGIYGKIYIATQVWTTKLGTNEWGWFDYSDDQAGIKFNNKGFWPAGVQNTLRNATPATAVETTYIYKESSKYGDVIVEYYDTDGKQIVNSVVDTPKSALGTEYNTDVDRRPASLVAADGTVYFYKEVKSDSAKTTGTVVAGTTTVKYVYEKAGSVNVNFVDINGKVIKAPVSDEKDAKPGYNYDTDLDQKLASITFEGKEYKLVPAGDYPVGKVGKGNNLIEVGNNTAKGIDPTTGKIEAGVNKEVTYVYRAVTGSVVVNYKDTEGNVIKDPETDVSDAPVGDAYTTTDKKPNEIITKDGSRYVLVPSKTDGEENGKVIEGTITVTYVYQKVANWIPEIPNVPETDRPKVPYPFDPTEPDEPIDPTTPGTNGEVPNIPYVPGYTPVDPKDNTPLKPIDPNDPGKGYVPPTPENPGVDTPIPYVPVKKVVTNHVDEEGNPIAPQEEGTKPNKSIPGYEFTGKTVTDEDGNTTHIYKKTPEVKNGTVVVNYVTEDGTVIKEPVTDTPTSPEGTPYDTTDNKPKTITFKGEEYELVRVDGTENGKVVEGETVVTYVYRKVETPAKKVVTNHVDEEGNPVAPQEEGTKPNKSIPGYEFTGKTVTDEDGNTTHIYKKTPAKKVVTNHVDEEGNPIAPQEDGTTPKRQISGYEYVRTVVDEEGNTTHIYRKLSNKPTTPEKETPAKPQAGKTASGKAQLPNTGEASSVAGALGTAMLVATLAFARKRRRNED</sequence>
<name>MRP_STRSU</name>
<accession>P32653</accession>
<protein>
    <recommendedName>
        <fullName>Muramidase-released protein</fullName>
    </recommendedName>
    <alternativeName>
        <fullName>136 kDa surface protein</fullName>
    </alternativeName>
</protein>
<organism>
    <name type="scientific">Streptococcus suis</name>
    <dbReference type="NCBI Taxonomy" id="1307"/>
    <lineage>
        <taxon>Bacteria</taxon>
        <taxon>Bacillati</taxon>
        <taxon>Bacillota</taxon>
        <taxon>Bacilli</taxon>
        <taxon>Lactobacillales</taxon>
        <taxon>Streptococcaceae</taxon>
        <taxon>Streptococcus</taxon>
    </lineage>
</organism>
<dbReference type="EMBL" id="X64450">
    <property type="protein sequence ID" value="CAA45781.1"/>
    <property type="molecule type" value="Genomic_DNA"/>
</dbReference>
<dbReference type="PIR" id="A43829">
    <property type="entry name" value="A43829"/>
</dbReference>
<dbReference type="RefSeq" id="WP_012775059.1">
    <property type="nucleotide sequence ID" value="NZ_WODB01000001.1"/>
</dbReference>
<dbReference type="SMR" id="P32653"/>
<dbReference type="GO" id="GO:0005576">
    <property type="term" value="C:extracellular region"/>
    <property type="evidence" value="ECO:0007669"/>
    <property type="project" value="UniProtKB-KW"/>
</dbReference>
<dbReference type="FunFam" id="3.10.20.320:FF:000001">
    <property type="entry name" value="Muramidase-released protein"/>
    <property type="match status" value="1"/>
</dbReference>
<dbReference type="FunFam" id="1.20.5.420:FF:000010">
    <property type="entry name" value="Truncated muramidase-released protein"/>
    <property type="match status" value="1"/>
</dbReference>
<dbReference type="Gene3D" id="1.20.5.420">
    <property type="entry name" value="Immunoglobulin FC, subunit C"/>
    <property type="match status" value="1"/>
</dbReference>
<dbReference type="Gene3D" id="3.10.20.320">
    <property type="entry name" value="Putative peptidoglycan bound protein (lpxtg motif)"/>
    <property type="match status" value="5"/>
</dbReference>
<dbReference type="InterPro" id="IPR019931">
    <property type="entry name" value="LPXTG_anchor"/>
</dbReference>
<dbReference type="InterPro" id="IPR009459">
    <property type="entry name" value="MucBP_dom"/>
</dbReference>
<dbReference type="InterPro" id="IPR027579">
    <property type="entry name" value="SSSPR51_Rpt"/>
</dbReference>
<dbReference type="InterPro" id="IPR005877">
    <property type="entry name" value="YSIRK_signal_dom"/>
</dbReference>
<dbReference type="NCBIfam" id="TIGR01167">
    <property type="entry name" value="LPXTG_anchor"/>
    <property type="match status" value="1"/>
</dbReference>
<dbReference type="NCBIfam" id="TIGR04308">
    <property type="entry name" value="repeat_SSSPR51"/>
    <property type="match status" value="3"/>
</dbReference>
<dbReference type="NCBIfam" id="TIGR01168">
    <property type="entry name" value="YSIRK_signal"/>
    <property type="match status" value="1"/>
</dbReference>
<dbReference type="Pfam" id="PF00746">
    <property type="entry name" value="Gram_pos_anchor"/>
    <property type="match status" value="1"/>
</dbReference>
<dbReference type="Pfam" id="PF06458">
    <property type="entry name" value="MucBP"/>
    <property type="match status" value="4"/>
</dbReference>
<dbReference type="Pfam" id="PF18877">
    <property type="entry name" value="SSSPR-51"/>
    <property type="match status" value="3"/>
</dbReference>
<dbReference type="Pfam" id="PF04650">
    <property type="entry name" value="YSIRK_signal"/>
    <property type="match status" value="1"/>
</dbReference>
<dbReference type="PROSITE" id="PS50847">
    <property type="entry name" value="GRAM_POS_ANCHORING"/>
    <property type="match status" value="1"/>
</dbReference>
<gene>
    <name type="primary">mrp</name>
</gene>
<evidence type="ECO:0000255" key="1"/>
<evidence type="ECO:0000255" key="2">
    <source>
        <dbReference type="PROSITE-ProRule" id="PRU00477"/>
    </source>
</evidence>
<evidence type="ECO:0000256" key="3">
    <source>
        <dbReference type="SAM" id="MobiDB-lite"/>
    </source>
</evidence>
<comment type="subcellular location">
    <subcellularLocation>
        <location evidence="2">Secreted</location>
        <location evidence="2">Cell wall</location>
        <topology evidence="2">Peptidoglycan-anchor</topology>
    </subcellularLocation>
</comment>
<keyword id="KW-0134">Cell wall</keyword>
<keyword id="KW-0572">Peptidoglycan-anchor</keyword>
<keyword id="KW-0677">Repeat</keyword>
<keyword id="KW-0964">Secreted</keyword>
<keyword id="KW-0732">Signal</keyword>
<feature type="signal peptide" evidence="1">
    <location>
        <begin position="1"/>
        <end position="47"/>
    </location>
</feature>
<feature type="chain" id="PRO_0000005629" description="Muramidase-released protein">
    <location>
        <begin position="48"/>
        <end position="1226"/>
    </location>
</feature>
<feature type="propeptide" id="PRO_0000005630" description="Removed by sortase" evidence="2">
    <location>
        <begin position="1227"/>
        <end position="1256"/>
    </location>
</feature>
<feature type="repeat" description="Small">
    <location>
        <begin position="663"/>
        <end position="681"/>
    </location>
</feature>
<feature type="repeat" description="Small">
    <location>
        <begin position="839"/>
        <end position="861"/>
    </location>
</feature>
<feature type="repeat" description="Large">
    <location>
        <begin position="953"/>
        <end position="1006"/>
    </location>
</feature>
<feature type="repeat" description="Small">
    <location>
        <begin position="1064"/>
        <end position="1084"/>
    </location>
</feature>
<feature type="repeat" description="Large">
    <location>
        <begin position="1089"/>
        <end position="1142"/>
    </location>
</feature>
<feature type="repeat" description="Large">
    <location>
        <begin position="1143"/>
        <end position="1195"/>
    </location>
</feature>
<feature type="region of interest" description="Disordered" evidence="3">
    <location>
        <begin position="873"/>
        <end position="949"/>
    </location>
</feature>
<feature type="region of interest" description="Disordered" evidence="3">
    <location>
        <begin position="967"/>
        <end position="994"/>
    </location>
</feature>
<feature type="region of interest" description="Disordered" evidence="3">
    <location>
        <begin position="1028"/>
        <end position="1049"/>
    </location>
</feature>
<feature type="region of interest" description="Disordered" evidence="3">
    <location>
        <begin position="1102"/>
        <end position="1137"/>
    </location>
</feature>
<feature type="region of interest" description="Disordered" evidence="3">
    <location>
        <begin position="1196"/>
        <end position="1229"/>
    </location>
</feature>
<feature type="short sequence motif" description="LPXTG sorting signal" evidence="2">
    <location>
        <begin position="1223"/>
        <end position="1227"/>
    </location>
</feature>
<feature type="compositionally biased region" description="Polar residues" evidence="3">
    <location>
        <begin position="1033"/>
        <end position="1045"/>
    </location>
</feature>
<feature type="modified residue" description="Pentaglycyl murein peptidoglycan amidated threonine" evidence="2">
    <location>
        <position position="1226"/>
    </location>
</feature>